<gene>
    <name type="primary">chlI</name>
    <name type="synonym">ccsA</name>
</gene>
<reference key="1">
    <citation type="journal article" date="1992" name="FEBS Lett.">
        <title>Mapping and sequencing of an actively transcribed Euglena gracilis chloroplast gene (ccsA) homologous to the Arabidopsis thaliana nuclear gene cs(ch-42).</title>
        <authorList>
            <person name="Orsat B."/>
            <person name="Monfort A."/>
            <person name="Chatellard P."/>
            <person name="Stutz E."/>
        </authorList>
    </citation>
    <scope>NUCLEOTIDE SEQUENCE [GENOMIC DNA]</scope>
    <source>
        <strain>Z / UTEX 753</strain>
    </source>
</reference>
<reference key="2">
    <citation type="journal article" date="1993" name="Nucleic Acids Res.">
        <title>Complete sequence of Euglena gracilis chloroplast DNA.</title>
        <authorList>
            <person name="Hallick R.B."/>
            <person name="Hong L."/>
            <person name="Drager R.G."/>
            <person name="Favreau M.R."/>
            <person name="Monfort A."/>
            <person name="Orsat B."/>
            <person name="Spielmann A."/>
            <person name="Stutz E."/>
        </authorList>
    </citation>
    <scope>NUCLEOTIDE SEQUENCE [LARGE SCALE GENOMIC DNA]</scope>
    <source>
        <strain>Z / UTEX 753</strain>
    </source>
</reference>
<feature type="chain" id="PRO_0000206867" description="Magnesium-chelatase subunit ChlI">
    <location>
        <begin position="1"/>
        <end position="348"/>
    </location>
</feature>
<feature type="binding site" evidence="1">
    <location>
        <begin position="42"/>
        <end position="49"/>
    </location>
    <ligand>
        <name>ATP</name>
        <dbReference type="ChEBI" id="CHEBI:30616"/>
    </ligand>
</feature>
<protein>
    <recommendedName>
        <fullName>Magnesium-chelatase subunit ChlI</fullName>
        <ecNumber>6.6.1.1</ecNumber>
    </recommendedName>
    <alternativeName>
        <fullName>Mg-protoporphyrin IX chelatase</fullName>
    </alternativeName>
</protein>
<geneLocation type="chloroplast"/>
<proteinExistence type="inferred from homology"/>
<name>CHLI_EUGGR</name>
<dbReference type="EC" id="6.6.1.1"/>
<dbReference type="EMBL" id="Z11874">
    <property type="status" value="NOT_ANNOTATED_CDS"/>
    <property type="molecule type" value="Genomic_DNA"/>
</dbReference>
<dbReference type="EMBL" id="X65484">
    <property type="protein sequence ID" value="CAA46470.1"/>
    <property type="molecule type" value="Genomic_DNA"/>
</dbReference>
<dbReference type="EMBL" id="X70810">
    <property type="protein sequence ID" value="CAA50075.1"/>
    <property type="molecule type" value="Genomic_DNA"/>
</dbReference>
<dbReference type="PIR" id="S34494">
    <property type="entry name" value="S34494"/>
</dbReference>
<dbReference type="RefSeq" id="NP_041888.1">
    <property type="nucleotide sequence ID" value="NC_001603.2"/>
</dbReference>
<dbReference type="SMR" id="P31205"/>
<dbReference type="GeneID" id="807485"/>
<dbReference type="UniPathway" id="UPA00668"/>
<dbReference type="GO" id="GO:0009570">
    <property type="term" value="C:chloroplast stroma"/>
    <property type="evidence" value="ECO:0007669"/>
    <property type="project" value="TreeGrafter"/>
</dbReference>
<dbReference type="GO" id="GO:0005524">
    <property type="term" value="F:ATP binding"/>
    <property type="evidence" value="ECO:0007669"/>
    <property type="project" value="UniProtKB-KW"/>
</dbReference>
<dbReference type="GO" id="GO:0016887">
    <property type="term" value="F:ATP hydrolysis activity"/>
    <property type="evidence" value="ECO:0007669"/>
    <property type="project" value="InterPro"/>
</dbReference>
<dbReference type="GO" id="GO:0016851">
    <property type="term" value="F:magnesium chelatase activity"/>
    <property type="evidence" value="ECO:0007669"/>
    <property type="project" value="UniProtKB-EC"/>
</dbReference>
<dbReference type="GO" id="GO:0015995">
    <property type="term" value="P:chlorophyll biosynthetic process"/>
    <property type="evidence" value="ECO:0007669"/>
    <property type="project" value="UniProtKB-UniPathway"/>
</dbReference>
<dbReference type="GO" id="GO:0015979">
    <property type="term" value="P:photosynthesis"/>
    <property type="evidence" value="ECO:0007669"/>
    <property type="project" value="UniProtKB-KW"/>
</dbReference>
<dbReference type="CDD" id="cd00009">
    <property type="entry name" value="AAA"/>
    <property type="match status" value="1"/>
</dbReference>
<dbReference type="FunFam" id="3.40.50.300:FF:000601">
    <property type="entry name" value="Mg-protoporphyrin IX chelatase"/>
    <property type="match status" value="1"/>
</dbReference>
<dbReference type="Gene3D" id="1.10.8.80">
    <property type="entry name" value="Magnesium chelatase subunit I, C-Terminal domain"/>
    <property type="match status" value="1"/>
</dbReference>
<dbReference type="Gene3D" id="3.40.50.300">
    <property type="entry name" value="P-loop containing nucleotide triphosphate hydrolases"/>
    <property type="match status" value="1"/>
</dbReference>
<dbReference type="InterPro" id="IPR003593">
    <property type="entry name" value="AAA+_ATPase"/>
</dbReference>
<dbReference type="InterPro" id="IPR045006">
    <property type="entry name" value="CHLI-like"/>
</dbReference>
<dbReference type="InterPro" id="IPR041628">
    <property type="entry name" value="ChlI/MoxR_AAA_lid"/>
</dbReference>
<dbReference type="InterPro" id="IPR011775">
    <property type="entry name" value="Mg_chelatase_ATPase-isu"/>
</dbReference>
<dbReference type="InterPro" id="IPR000523">
    <property type="entry name" value="Mg_chelatse_chII-like_cat_dom"/>
</dbReference>
<dbReference type="InterPro" id="IPR027417">
    <property type="entry name" value="P-loop_NTPase"/>
</dbReference>
<dbReference type="NCBIfam" id="TIGR02030">
    <property type="entry name" value="BchI-ChlI"/>
    <property type="match status" value="1"/>
</dbReference>
<dbReference type="PANTHER" id="PTHR32039">
    <property type="entry name" value="MAGNESIUM-CHELATASE SUBUNIT CHLI"/>
    <property type="match status" value="1"/>
</dbReference>
<dbReference type="PANTHER" id="PTHR32039:SF9">
    <property type="entry name" value="MAGNESIUM-CHELATASE SUBUNIT CHLI-2, CHLOROPLASTIC"/>
    <property type="match status" value="1"/>
</dbReference>
<dbReference type="Pfam" id="PF17863">
    <property type="entry name" value="AAA_lid_2"/>
    <property type="match status" value="1"/>
</dbReference>
<dbReference type="Pfam" id="PF01078">
    <property type="entry name" value="Mg_chelatase"/>
    <property type="match status" value="1"/>
</dbReference>
<dbReference type="SMART" id="SM00382">
    <property type="entry name" value="AAA"/>
    <property type="match status" value="1"/>
</dbReference>
<dbReference type="SUPFAM" id="SSF52540">
    <property type="entry name" value="P-loop containing nucleoside triphosphate hydrolases"/>
    <property type="match status" value="1"/>
</dbReference>
<evidence type="ECO:0000255" key="1"/>
<evidence type="ECO:0000305" key="2"/>
<organism>
    <name type="scientific">Euglena gracilis</name>
    <dbReference type="NCBI Taxonomy" id="3039"/>
    <lineage>
        <taxon>Eukaryota</taxon>
        <taxon>Discoba</taxon>
        <taxon>Euglenozoa</taxon>
        <taxon>Euglenida</taxon>
        <taxon>Spirocuta</taxon>
        <taxon>Euglenophyceae</taxon>
        <taxon>Euglenales</taxon>
        <taxon>Euglenaceae</taxon>
        <taxon>Euglena</taxon>
    </lineage>
</organism>
<sequence>MNKKTNERPVFPFTSIVGQEEMKLSLILNVIDPKIGGVMIMGDRGTGKSTIVRALVDLLPPIDVIENDPYNSDPYDTELMSDDVLEKIKKNEKVSIIQVKTPMVDLPLGGTEDRVCGTIDIEKAISEGKKAFEPGLLAQANRGILYVDEVNLLDDHLVDVLLDSAASGWNTVEREGVSICHPARFILVGSGNPEEGELRPQLLDRFGMHAQIKTLKEPALRVKIVQQRELFEKSPKEFKEKYKEEQNKLMEKIINARKKLKNIIIKYELLEKISQICSELNVDGLRGDMVTSRAAKALVAFEDRTEVTPKDIFTVITLCLRHRLRKDPLESIDSGYKVQETFKKVFNY</sequence>
<accession>P31205</accession>
<comment type="function">
    <text>Involved in chlorophyll biosynthesis; introduces a magnesium ion into protoporphyrin IX to yield Mg-protoporphyrin IX.</text>
</comment>
<comment type="catalytic activity">
    <reaction>
        <text>protoporphyrin IX + Mg(2+) + ATP + H2O = Mg-protoporphyrin IX + ADP + phosphate + 3 H(+)</text>
        <dbReference type="Rhea" id="RHEA:13961"/>
        <dbReference type="ChEBI" id="CHEBI:15377"/>
        <dbReference type="ChEBI" id="CHEBI:15378"/>
        <dbReference type="ChEBI" id="CHEBI:18420"/>
        <dbReference type="ChEBI" id="CHEBI:30616"/>
        <dbReference type="ChEBI" id="CHEBI:43474"/>
        <dbReference type="ChEBI" id="CHEBI:57306"/>
        <dbReference type="ChEBI" id="CHEBI:60492"/>
        <dbReference type="ChEBI" id="CHEBI:456216"/>
        <dbReference type="EC" id="6.6.1.1"/>
    </reaction>
</comment>
<comment type="pathway">
    <text>Porphyrin-containing compound metabolism; chlorophyll biosynthesis.</text>
</comment>
<comment type="subcellular location">
    <subcellularLocation>
        <location>Plastid</location>
        <location>Chloroplast</location>
    </subcellularLocation>
</comment>
<comment type="similarity">
    <text evidence="2">Belongs to the Mg-chelatase subunits D/I family.</text>
</comment>
<keyword id="KW-0067">ATP-binding</keyword>
<keyword id="KW-0149">Chlorophyll biosynthesis</keyword>
<keyword id="KW-0150">Chloroplast</keyword>
<keyword id="KW-0436">Ligase</keyword>
<keyword id="KW-0547">Nucleotide-binding</keyword>
<keyword id="KW-0602">Photosynthesis</keyword>
<keyword id="KW-0934">Plastid</keyword>